<evidence type="ECO:0000255" key="1">
    <source>
        <dbReference type="HAMAP-Rule" id="MF_00034"/>
    </source>
</evidence>
<dbReference type="EC" id="3.1.21.10" evidence="1"/>
<dbReference type="EMBL" id="CP000628">
    <property type="protein sequence ID" value="ACM27594.1"/>
    <property type="molecule type" value="Genomic_DNA"/>
</dbReference>
<dbReference type="RefSeq" id="WP_012652264.1">
    <property type="nucleotide sequence ID" value="NC_011985.1"/>
</dbReference>
<dbReference type="SMR" id="B9J9J2"/>
<dbReference type="STRING" id="311403.Arad_3699"/>
<dbReference type="GeneID" id="86849452"/>
<dbReference type="KEGG" id="ara:Arad_3699"/>
<dbReference type="eggNOG" id="COG0817">
    <property type="taxonomic scope" value="Bacteria"/>
</dbReference>
<dbReference type="HOGENOM" id="CLU_091257_1_0_5"/>
<dbReference type="Proteomes" id="UP000001600">
    <property type="component" value="Chromosome 1"/>
</dbReference>
<dbReference type="GO" id="GO:0005737">
    <property type="term" value="C:cytoplasm"/>
    <property type="evidence" value="ECO:0007669"/>
    <property type="project" value="UniProtKB-SubCell"/>
</dbReference>
<dbReference type="GO" id="GO:0048476">
    <property type="term" value="C:Holliday junction resolvase complex"/>
    <property type="evidence" value="ECO:0007669"/>
    <property type="project" value="UniProtKB-UniRule"/>
</dbReference>
<dbReference type="GO" id="GO:0008821">
    <property type="term" value="F:crossover junction DNA endonuclease activity"/>
    <property type="evidence" value="ECO:0007669"/>
    <property type="project" value="UniProtKB-UniRule"/>
</dbReference>
<dbReference type="GO" id="GO:0003677">
    <property type="term" value="F:DNA binding"/>
    <property type="evidence" value="ECO:0007669"/>
    <property type="project" value="UniProtKB-KW"/>
</dbReference>
<dbReference type="GO" id="GO:0000287">
    <property type="term" value="F:magnesium ion binding"/>
    <property type="evidence" value="ECO:0007669"/>
    <property type="project" value="UniProtKB-UniRule"/>
</dbReference>
<dbReference type="GO" id="GO:0006310">
    <property type="term" value="P:DNA recombination"/>
    <property type="evidence" value="ECO:0007669"/>
    <property type="project" value="UniProtKB-UniRule"/>
</dbReference>
<dbReference type="GO" id="GO:0006281">
    <property type="term" value="P:DNA repair"/>
    <property type="evidence" value="ECO:0007669"/>
    <property type="project" value="UniProtKB-UniRule"/>
</dbReference>
<dbReference type="CDD" id="cd16962">
    <property type="entry name" value="RuvC"/>
    <property type="match status" value="1"/>
</dbReference>
<dbReference type="FunFam" id="3.30.420.10:FF:000002">
    <property type="entry name" value="Crossover junction endodeoxyribonuclease RuvC"/>
    <property type="match status" value="1"/>
</dbReference>
<dbReference type="Gene3D" id="3.30.420.10">
    <property type="entry name" value="Ribonuclease H-like superfamily/Ribonuclease H"/>
    <property type="match status" value="1"/>
</dbReference>
<dbReference type="HAMAP" id="MF_00034">
    <property type="entry name" value="RuvC"/>
    <property type="match status" value="1"/>
</dbReference>
<dbReference type="InterPro" id="IPR012337">
    <property type="entry name" value="RNaseH-like_sf"/>
</dbReference>
<dbReference type="InterPro" id="IPR036397">
    <property type="entry name" value="RNaseH_sf"/>
</dbReference>
<dbReference type="InterPro" id="IPR020563">
    <property type="entry name" value="X-over_junc_endoDNase_Mg_BS"/>
</dbReference>
<dbReference type="InterPro" id="IPR002176">
    <property type="entry name" value="X-over_junc_endoDNase_RuvC"/>
</dbReference>
<dbReference type="NCBIfam" id="TIGR00228">
    <property type="entry name" value="ruvC"/>
    <property type="match status" value="1"/>
</dbReference>
<dbReference type="PANTHER" id="PTHR30194">
    <property type="entry name" value="CROSSOVER JUNCTION ENDODEOXYRIBONUCLEASE RUVC"/>
    <property type="match status" value="1"/>
</dbReference>
<dbReference type="PANTHER" id="PTHR30194:SF3">
    <property type="entry name" value="CROSSOVER JUNCTION ENDODEOXYRIBONUCLEASE RUVC"/>
    <property type="match status" value="1"/>
</dbReference>
<dbReference type="Pfam" id="PF02075">
    <property type="entry name" value="RuvC"/>
    <property type="match status" value="1"/>
</dbReference>
<dbReference type="PRINTS" id="PR00696">
    <property type="entry name" value="RSOLVASERUVC"/>
</dbReference>
<dbReference type="SUPFAM" id="SSF53098">
    <property type="entry name" value="Ribonuclease H-like"/>
    <property type="match status" value="1"/>
</dbReference>
<dbReference type="PROSITE" id="PS01321">
    <property type="entry name" value="RUVC"/>
    <property type="match status" value="1"/>
</dbReference>
<feature type="chain" id="PRO_1000195230" description="Crossover junction endodeoxyribonuclease RuvC">
    <location>
        <begin position="1"/>
        <end position="170"/>
    </location>
</feature>
<feature type="active site" evidence="1">
    <location>
        <position position="11"/>
    </location>
</feature>
<feature type="active site" evidence="1">
    <location>
        <position position="71"/>
    </location>
</feature>
<feature type="active site" evidence="1">
    <location>
        <position position="143"/>
    </location>
</feature>
<feature type="binding site" evidence="1">
    <location>
        <position position="11"/>
    </location>
    <ligand>
        <name>Mg(2+)</name>
        <dbReference type="ChEBI" id="CHEBI:18420"/>
        <label>1</label>
    </ligand>
</feature>
<feature type="binding site" evidence="1">
    <location>
        <position position="71"/>
    </location>
    <ligand>
        <name>Mg(2+)</name>
        <dbReference type="ChEBI" id="CHEBI:18420"/>
        <label>2</label>
    </ligand>
</feature>
<feature type="binding site" evidence="1">
    <location>
        <position position="143"/>
    </location>
    <ligand>
        <name>Mg(2+)</name>
        <dbReference type="ChEBI" id="CHEBI:18420"/>
        <label>1</label>
    </ligand>
</feature>
<name>RUVC_RHIR8</name>
<comment type="function">
    <text evidence="1">The RuvA-RuvB-RuvC complex processes Holliday junction (HJ) DNA during genetic recombination and DNA repair. Endonuclease that resolves HJ intermediates. Cleaves cruciform DNA by making single-stranded nicks across the HJ at symmetrical positions within the homologous arms, yielding a 5'-phosphate and a 3'-hydroxyl group; requires a central core of homology in the junction. The consensus cleavage sequence is 5'-(A/T)TT(C/G)-3'. Cleavage occurs on the 3'-side of the TT dinucleotide at the point of strand exchange. HJ branch migration catalyzed by RuvA-RuvB allows RuvC to scan DNA until it finds its consensus sequence, where it cleaves and resolves the cruciform DNA.</text>
</comment>
<comment type="catalytic activity">
    <reaction evidence="1">
        <text>Endonucleolytic cleavage at a junction such as a reciprocal single-stranded crossover between two homologous DNA duplexes (Holliday junction).</text>
        <dbReference type="EC" id="3.1.21.10"/>
    </reaction>
</comment>
<comment type="cofactor">
    <cofactor evidence="1">
        <name>Mg(2+)</name>
        <dbReference type="ChEBI" id="CHEBI:18420"/>
    </cofactor>
    <text evidence="1">Binds 2 Mg(2+) ion per subunit.</text>
</comment>
<comment type="subunit">
    <text evidence="1">Homodimer which binds Holliday junction (HJ) DNA. The HJ becomes 2-fold symmetrical on binding to RuvC with unstacked arms; it has a different conformation from HJ DNA in complex with RuvA. In the full resolvosome a probable DNA-RuvA(4)-RuvB(12)-RuvC(2) complex forms which resolves the HJ.</text>
</comment>
<comment type="subcellular location">
    <subcellularLocation>
        <location evidence="1">Cytoplasm</location>
    </subcellularLocation>
</comment>
<comment type="similarity">
    <text evidence="1">Belongs to the RuvC family.</text>
</comment>
<proteinExistence type="inferred from homology"/>
<gene>
    <name evidence="1" type="primary">ruvC</name>
    <name type="ordered locus">Arad_3699</name>
</gene>
<reference key="1">
    <citation type="journal article" date="2009" name="J. Bacteriol.">
        <title>Genome sequences of three Agrobacterium biovars help elucidate the evolution of multichromosome genomes in bacteria.</title>
        <authorList>
            <person name="Slater S.C."/>
            <person name="Goldman B.S."/>
            <person name="Goodner B."/>
            <person name="Setubal J.C."/>
            <person name="Farrand S.K."/>
            <person name="Nester E.W."/>
            <person name="Burr T.J."/>
            <person name="Banta L."/>
            <person name="Dickerman A.W."/>
            <person name="Paulsen I."/>
            <person name="Otten L."/>
            <person name="Suen G."/>
            <person name="Welch R."/>
            <person name="Almeida N.F."/>
            <person name="Arnold F."/>
            <person name="Burton O.T."/>
            <person name="Du Z."/>
            <person name="Ewing A."/>
            <person name="Godsy E."/>
            <person name="Heisel S."/>
            <person name="Houmiel K.L."/>
            <person name="Jhaveri J."/>
            <person name="Lu J."/>
            <person name="Miller N.M."/>
            <person name="Norton S."/>
            <person name="Chen Q."/>
            <person name="Phoolcharoen W."/>
            <person name="Ohlin V."/>
            <person name="Ondrusek D."/>
            <person name="Pride N."/>
            <person name="Stricklin S.L."/>
            <person name="Sun J."/>
            <person name="Wheeler C."/>
            <person name="Wilson L."/>
            <person name="Zhu H."/>
            <person name="Wood D.W."/>
        </authorList>
    </citation>
    <scope>NUCLEOTIDE SEQUENCE [LARGE SCALE GENOMIC DNA]</scope>
    <source>
        <strain>K84 / ATCC BAA-868</strain>
    </source>
</reference>
<accession>B9J9J2</accession>
<protein>
    <recommendedName>
        <fullName evidence="1">Crossover junction endodeoxyribonuclease RuvC</fullName>
        <ecNumber evidence="1">3.1.21.10</ecNumber>
    </recommendedName>
    <alternativeName>
        <fullName evidence="1">Holliday junction nuclease RuvC</fullName>
    </alternativeName>
    <alternativeName>
        <fullName evidence="1">Holliday junction resolvase RuvC</fullName>
    </alternativeName>
</protein>
<organism>
    <name type="scientific">Rhizobium rhizogenes (strain K84 / ATCC BAA-868)</name>
    <name type="common">Agrobacterium radiobacter</name>
    <dbReference type="NCBI Taxonomy" id="311403"/>
    <lineage>
        <taxon>Bacteria</taxon>
        <taxon>Pseudomonadati</taxon>
        <taxon>Pseudomonadota</taxon>
        <taxon>Alphaproteobacteria</taxon>
        <taxon>Hyphomicrobiales</taxon>
        <taxon>Rhizobiaceae</taxon>
        <taxon>Rhizobium/Agrobacterium group</taxon>
        <taxon>Rhizobium</taxon>
    </lineage>
</organism>
<sequence>MQNTIRIIGIDPGLRRTGWGVIDTLGNSLRFVASGTVTSDGDMDLASRLCQLHDGLADIVHGYKPDEAAVEQTFVNKDAVATLKLGQARGIAMLVPARAGLPVAEYAPNAVKKAVIGVGHGEKQQIHMMLKILMPKAEFKGNDAADALAIAICHAHNRGANRLRQAALAG</sequence>
<keyword id="KW-0963">Cytoplasm</keyword>
<keyword id="KW-0227">DNA damage</keyword>
<keyword id="KW-0233">DNA recombination</keyword>
<keyword id="KW-0234">DNA repair</keyword>
<keyword id="KW-0238">DNA-binding</keyword>
<keyword id="KW-0255">Endonuclease</keyword>
<keyword id="KW-0378">Hydrolase</keyword>
<keyword id="KW-0460">Magnesium</keyword>
<keyword id="KW-0479">Metal-binding</keyword>
<keyword id="KW-0540">Nuclease</keyword>